<comment type="function">
    <text>PsaA and PsaB bind P700, the primary electron donor of photosystem I (PSI), as well as the electron acceptors A0, A1 and FX. PSI is a plastocyanin-ferredoxin oxidoreductase, converting photonic excitation into a charge separation, which transfers an electron from the donor P700 chlorophyll pair to the spectroscopically characterized acceptors A0, A1, FX, FA and FB in turn. Oxidized P700 is reduced on the lumenal side of the thylakoid membrane by plastocyanin.</text>
</comment>
<comment type="catalytic activity">
    <reaction evidence="1">
        <text>reduced [plastocyanin] + hnu + oxidized [2Fe-2S]-[ferredoxin] = oxidized [plastocyanin] + reduced [2Fe-2S]-[ferredoxin]</text>
        <dbReference type="Rhea" id="RHEA:30407"/>
        <dbReference type="Rhea" id="RHEA-COMP:10000"/>
        <dbReference type="Rhea" id="RHEA-COMP:10001"/>
        <dbReference type="Rhea" id="RHEA-COMP:10039"/>
        <dbReference type="Rhea" id="RHEA-COMP:10040"/>
        <dbReference type="ChEBI" id="CHEBI:29036"/>
        <dbReference type="ChEBI" id="CHEBI:30212"/>
        <dbReference type="ChEBI" id="CHEBI:33737"/>
        <dbReference type="ChEBI" id="CHEBI:33738"/>
        <dbReference type="ChEBI" id="CHEBI:49552"/>
        <dbReference type="EC" id="1.97.1.12"/>
    </reaction>
</comment>
<comment type="cofactor">
    <text evidence="1">P700 is a chlorophyll a/chlorophyll a' dimer, A0 is one or more chlorophyll a, A1 is one or both phylloquinones and FX is a shared 4Fe-4S iron-sulfur center.</text>
</comment>
<comment type="subunit">
    <text evidence="1">The PsaA/B heterodimer binds the P700 chlorophyll special pair and subsequent electron acceptors. PSI consists of a core antenna complex that captures photons, and an electron transfer chain that converts photonic excitation into a charge separation. The eukaryotic PSI reaction center is composed of at least 11 subunits.</text>
</comment>
<comment type="subcellular location">
    <subcellularLocation>
        <location evidence="1">Plastid</location>
        <location evidence="1">Chloroplast thylakoid membrane</location>
        <topology evidence="1">Multi-pass membrane protein</topology>
    </subcellularLocation>
</comment>
<comment type="similarity">
    <text evidence="1">Belongs to the PsaA/PsaB family.</text>
</comment>
<protein>
    <recommendedName>
        <fullName evidence="1">Photosystem I P700 chlorophyll a apoprotein A1</fullName>
        <ecNumber evidence="1">1.97.1.12</ecNumber>
    </recommendedName>
    <alternativeName>
        <fullName evidence="1">PSI-A</fullName>
    </alternativeName>
    <alternativeName>
        <fullName evidence="1">PsaA</fullName>
    </alternativeName>
</protein>
<geneLocation type="chloroplast"/>
<proteinExistence type="inferred from homology"/>
<feature type="chain" id="PRO_0000275937" description="Photosystem I P700 chlorophyll a apoprotein A1">
    <location>
        <begin position="1"/>
        <end position="748"/>
    </location>
</feature>
<feature type="transmembrane region" description="Helical; Name=I" evidence="1">
    <location>
        <begin position="70"/>
        <end position="93"/>
    </location>
</feature>
<feature type="transmembrane region" description="Helical; Name=II" evidence="1">
    <location>
        <begin position="156"/>
        <end position="179"/>
    </location>
</feature>
<feature type="transmembrane region" description="Helical; Name=III" evidence="1">
    <location>
        <begin position="195"/>
        <end position="219"/>
    </location>
</feature>
<feature type="transmembrane region" description="Helical; Name=IV" evidence="1">
    <location>
        <begin position="291"/>
        <end position="309"/>
    </location>
</feature>
<feature type="transmembrane region" description="Helical; Name=V" evidence="1">
    <location>
        <begin position="346"/>
        <end position="369"/>
    </location>
</feature>
<feature type="transmembrane region" description="Helical; Name=VI" evidence="1">
    <location>
        <begin position="385"/>
        <end position="411"/>
    </location>
</feature>
<feature type="transmembrane region" description="Helical; Name=VII" evidence="1">
    <location>
        <begin position="433"/>
        <end position="455"/>
    </location>
</feature>
<feature type="transmembrane region" description="Helical; Name=VIII" evidence="1">
    <location>
        <begin position="530"/>
        <end position="548"/>
    </location>
</feature>
<feature type="transmembrane region" description="Helical; Name=IX" evidence="1">
    <location>
        <begin position="588"/>
        <end position="609"/>
    </location>
</feature>
<feature type="transmembrane region" description="Helical; Name=X" evidence="1">
    <location>
        <begin position="662"/>
        <end position="684"/>
    </location>
</feature>
<feature type="transmembrane region" description="Helical; Name=XI" evidence="1">
    <location>
        <begin position="722"/>
        <end position="742"/>
    </location>
</feature>
<feature type="binding site" evidence="1">
    <location>
        <position position="572"/>
    </location>
    <ligand>
        <name>[4Fe-4S] cluster</name>
        <dbReference type="ChEBI" id="CHEBI:49883"/>
        <note>ligand shared between dimeric partners</note>
    </ligand>
</feature>
<feature type="binding site" evidence="1">
    <location>
        <position position="581"/>
    </location>
    <ligand>
        <name>[4Fe-4S] cluster</name>
        <dbReference type="ChEBI" id="CHEBI:49883"/>
        <note>ligand shared between dimeric partners</note>
    </ligand>
</feature>
<feature type="binding site" description="axial binding residue" evidence="1">
    <location>
        <position position="673"/>
    </location>
    <ligand>
        <name>chlorophyll a'</name>
        <dbReference type="ChEBI" id="CHEBI:189419"/>
        <label>A1</label>
    </ligand>
    <ligandPart>
        <name>Mg</name>
        <dbReference type="ChEBI" id="CHEBI:25107"/>
    </ligandPart>
</feature>
<feature type="binding site" description="axial binding residue" evidence="1">
    <location>
        <position position="681"/>
    </location>
    <ligand>
        <name>chlorophyll a</name>
        <dbReference type="ChEBI" id="CHEBI:58416"/>
        <label>A3</label>
    </ligand>
    <ligandPart>
        <name>Mg</name>
        <dbReference type="ChEBI" id="CHEBI:25107"/>
    </ligandPart>
</feature>
<feature type="binding site" evidence="1">
    <location>
        <position position="689"/>
    </location>
    <ligand>
        <name>chlorophyll a</name>
        <dbReference type="ChEBI" id="CHEBI:58416"/>
        <label>A3</label>
    </ligand>
</feature>
<feature type="binding site" evidence="1">
    <location>
        <position position="690"/>
    </location>
    <ligand>
        <name>phylloquinone</name>
        <dbReference type="ChEBI" id="CHEBI:18067"/>
        <label>A</label>
    </ligand>
</feature>
<organism>
    <name type="scientific">Chara vulgaris</name>
    <name type="common">Common stonewort</name>
    <dbReference type="NCBI Taxonomy" id="55564"/>
    <lineage>
        <taxon>Eukaryota</taxon>
        <taxon>Viridiplantae</taxon>
        <taxon>Streptophyta</taxon>
        <taxon>Charophyceae</taxon>
        <taxon>Charales</taxon>
        <taxon>Characeae</taxon>
        <taxon>Chara</taxon>
    </lineage>
</organism>
<accession>Q1ACL4</accession>
<dbReference type="EC" id="1.97.1.12" evidence="1"/>
<dbReference type="EMBL" id="DQ229107">
    <property type="protein sequence ID" value="ABA61903.1"/>
    <property type="molecule type" value="Genomic_DNA"/>
</dbReference>
<dbReference type="RefSeq" id="YP_635733.1">
    <property type="nucleotide sequence ID" value="NC_008097.1"/>
</dbReference>
<dbReference type="SMR" id="Q1ACL4"/>
<dbReference type="GeneID" id="4100273"/>
<dbReference type="GO" id="GO:0009535">
    <property type="term" value="C:chloroplast thylakoid membrane"/>
    <property type="evidence" value="ECO:0007669"/>
    <property type="project" value="UniProtKB-SubCell"/>
</dbReference>
<dbReference type="GO" id="GO:0009522">
    <property type="term" value="C:photosystem I"/>
    <property type="evidence" value="ECO:0007669"/>
    <property type="project" value="UniProtKB-KW"/>
</dbReference>
<dbReference type="GO" id="GO:0051539">
    <property type="term" value="F:4 iron, 4 sulfur cluster binding"/>
    <property type="evidence" value="ECO:0007669"/>
    <property type="project" value="UniProtKB-KW"/>
</dbReference>
<dbReference type="GO" id="GO:0016168">
    <property type="term" value="F:chlorophyll binding"/>
    <property type="evidence" value="ECO:0007669"/>
    <property type="project" value="UniProtKB-KW"/>
</dbReference>
<dbReference type="GO" id="GO:0009055">
    <property type="term" value="F:electron transfer activity"/>
    <property type="evidence" value="ECO:0007669"/>
    <property type="project" value="UniProtKB-UniRule"/>
</dbReference>
<dbReference type="GO" id="GO:0000287">
    <property type="term" value="F:magnesium ion binding"/>
    <property type="evidence" value="ECO:0007669"/>
    <property type="project" value="UniProtKB-UniRule"/>
</dbReference>
<dbReference type="GO" id="GO:0016491">
    <property type="term" value="F:oxidoreductase activity"/>
    <property type="evidence" value="ECO:0007669"/>
    <property type="project" value="UniProtKB-KW"/>
</dbReference>
<dbReference type="GO" id="GO:0015979">
    <property type="term" value="P:photosynthesis"/>
    <property type="evidence" value="ECO:0007669"/>
    <property type="project" value="UniProtKB-UniRule"/>
</dbReference>
<dbReference type="FunFam" id="1.20.1130.10:FF:000001">
    <property type="entry name" value="Photosystem I P700 chlorophyll a apoprotein A2"/>
    <property type="match status" value="1"/>
</dbReference>
<dbReference type="Gene3D" id="1.20.1130.10">
    <property type="entry name" value="Photosystem I PsaA/PsaB"/>
    <property type="match status" value="1"/>
</dbReference>
<dbReference type="HAMAP" id="MF_00458">
    <property type="entry name" value="PSI_PsaA"/>
    <property type="match status" value="1"/>
</dbReference>
<dbReference type="InterPro" id="IPR006243">
    <property type="entry name" value="PSI_PsaA"/>
</dbReference>
<dbReference type="InterPro" id="IPR001280">
    <property type="entry name" value="PSI_PsaA/B"/>
</dbReference>
<dbReference type="InterPro" id="IPR020586">
    <property type="entry name" value="PSI_PsaA/B_CS"/>
</dbReference>
<dbReference type="InterPro" id="IPR036408">
    <property type="entry name" value="PSI_PsaA/B_sf"/>
</dbReference>
<dbReference type="NCBIfam" id="TIGR01335">
    <property type="entry name" value="psaA"/>
    <property type="match status" value="1"/>
</dbReference>
<dbReference type="PANTHER" id="PTHR30128">
    <property type="entry name" value="OUTER MEMBRANE PROTEIN, OMPA-RELATED"/>
    <property type="match status" value="1"/>
</dbReference>
<dbReference type="PANTHER" id="PTHR30128:SF19">
    <property type="entry name" value="PHOTOSYSTEM I P700 CHLOROPHYLL A APOPROTEIN A1-RELATED"/>
    <property type="match status" value="1"/>
</dbReference>
<dbReference type="Pfam" id="PF00223">
    <property type="entry name" value="PsaA_PsaB"/>
    <property type="match status" value="1"/>
</dbReference>
<dbReference type="PIRSF" id="PIRSF002905">
    <property type="entry name" value="PSI_A"/>
    <property type="match status" value="1"/>
</dbReference>
<dbReference type="PRINTS" id="PR00257">
    <property type="entry name" value="PHOTSYSPSAAB"/>
</dbReference>
<dbReference type="SUPFAM" id="SSF81558">
    <property type="entry name" value="Photosystem I subunits PsaA/PsaB"/>
    <property type="match status" value="1"/>
</dbReference>
<dbReference type="PROSITE" id="PS00419">
    <property type="entry name" value="PHOTOSYSTEM_I_PSAAB"/>
    <property type="match status" value="1"/>
</dbReference>
<name>PSAA_CHAVU</name>
<keyword id="KW-0004">4Fe-4S</keyword>
<keyword id="KW-0148">Chlorophyll</keyword>
<keyword id="KW-0150">Chloroplast</keyword>
<keyword id="KW-0157">Chromophore</keyword>
<keyword id="KW-0249">Electron transport</keyword>
<keyword id="KW-0408">Iron</keyword>
<keyword id="KW-0411">Iron-sulfur</keyword>
<keyword id="KW-0460">Magnesium</keyword>
<keyword id="KW-0472">Membrane</keyword>
<keyword id="KW-0479">Metal-binding</keyword>
<keyword id="KW-0560">Oxidoreductase</keyword>
<keyword id="KW-0602">Photosynthesis</keyword>
<keyword id="KW-0603">Photosystem I</keyword>
<keyword id="KW-0934">Plastid</keyword>
<keyword id="KW-0793">Thylakoid</keyword>
<keyword id="KW-0812">Transmembrane</keyword>
<keyword id="KW-1133">Transmembrane helix</keyword>
<keyword id="KW-0813">Transport</keyword>
<gene>
    <name evidence="1" type="primary">psaA</name>
</gene>
<evidence type="ECO:0000255" key="1">
    <source>
        <dbReference type="HAMAP-Rule" id="MF_00458"/>
    </source>
</evidence>
<sequence>MTISRPEQEVKILVEKDPIKTSFEKWAKPGHFSRNLSKGPNTTTWIWNLHADAHDFDSHTSDLEDISRKVFSAHFGQLAVIFIWISGMYFHGARFSNYEAWLSDPIHIKPSAQVVWPIVGQEILNGDVGGGFQGIQITSGFFQIWRASGITSELQLYTTAIGGLVMAGLMLFAGWFHYHKAAPKLAWFQDVESMLNHHLAGLLGLGSLAWAGHQIHVSMPINELLDAGVDPKEIPLPHEFILNRDLIAELYPSFKSGLIPFFTLNWSAYSDFLTFRGGLNPVTGGLWLSDTAHHHLAIAVLFLIAGHMYRTNWGIGHNMKDILEAHKGPFTGEGHKGLYEIFTTSWHAQLSLNLAMLGSLTIIVAHHMYSMPPYPYLAIDYGTQLSLFTHHMWIGGFCIVGAAAHAAIFMVRDYDSANQYNNLLDRVIRHRDAIISHLNWACIFLGFHSFGLYIHNDTMRALGRPQDMFSDTAIQLQPIFAQWIQNTHVLAPSLTAPQATSATSPVWGEGLITVGGKVAMMPIPLGTADFLVHHIHAFTIHVTVLILLKGVLFSRSSRLIPDKANLGFRFPCDGPGRGGTCQVSAWDHIFLGLFWMYNSLSIAIFHFSWKMQSDVWGNVTPQGISHITGGNFAQSSITINGWLRDFLWAQASQVIQSYGSPLSAYGLIFLGAHFVWAFSLMFLFSGRGYWQELIESIVWAHNKLKVAPAIQPRALSIVQGRAVGVAHYLLGGIATTWAFFLARIISVA</sequence>
<reference key="1">
    <citation type="journal article" date="2006" name="Mol. Biol. Evol.">
        <title>The chloroplast genome sequence of Chara vulgaris sheds new light into the closest green algal relatives of land plants.</title>
        <authorList>
            <person name="Turmel M."/>
            <person name="Otis C."/>
            <person name="Lemieux C."/>
        </authorList>
    </citation>
    <scope>NUCLEOTIDE SEQUENCE [LARGE SCALE GENOMIC DNA]</scope>
</reference>